<evidence type="ECO:0000255" key="1">
    <source>
        <dbReference type="HAMAP-Rule" id="MF_00707"/>
    </source>
</evidence>
<sequence>MPNKFLIIDNSILPDIFEKVVKVKELLANGKVKDITEGVKTVGISRSTYYKYKDFVFSVSEGVKSQKATIGLLLGHERGTLSKILDRIAEYQGNILTINQDIPINNTANVSITFDISQMSIGLKELVEEIKNTKNVIKVDLIAME</sequence>
<proteinExistence type="inferred from homology"/>
<protein>
    <recommendedName>
        <fullName evidence="1">UPF0735 ACT domain-containing protein CBO3010/CLC_2906</fullName>
    </recommendedName>
</protein>
<dbReference type="EMBL" id="CP000727">
    <property type="protein sequence ID" value="ABS37152.1"/>
    <property type="molecule type" value="Genomic_DNA"/>
</dbReference>
<dbReference type="EMBL" id="AM412317">
    <property type="protein sequence ID" value="CAL84571.1"/>
    <property type="molecule type" value="Genomic_DNA"/>
</dbReference>
<dbReference type="RefSeq" id="WP_003357848.1">
    <property type="nucleotide sequence ID" value="NC_009698.1"/>
</dbReference>
<dbReference type="RefSeq" id="YP_001255501.1">
    <property type="nucleotide sequence ID" value="NC_009495.1"/>
</dbReference>
<dbReference type="RefSeq" id="YP_001388737.1">
    <property type="nucleotide sequence ID" value="NC_009698.1"/>
</dbReference>
<dbReference type="KEGG" id="cbh:CLC_2906"/>
<dbReference type="KEGG" id="cbo:CBO3010"/>
<dbReference type="PATRIC" id="fig|413999.7.peg.2987"/>
<dbReference type="HOGENOM" id="CLU_128147_0_0_9"/>
<dbReference type="PRO" id="PR:A5I689"/>
<dbReference type="Proteomes" id="UP000001986">
    <property type="component" value="Chromosome"/>
</dbReference>
<dbReference type="CDD" id="cd04888">
    <property type="entry name" value="ACT_PheB-BS"/>
    <property type="match status" value="1"/>
</dbReference>
<dbReference type="Gene3D" id="3.30.70.260">
    <property type="match status" value="1"/>
</dbReference>
<dbReference type="HAMAP" id="MF_00707">
    <property type="entry name" value="UPF0735"/>
    <property type="match status" value="1"/>
</dbReference>
<dbReference type="InterPro" id="IPR045865">
    <property type="entry name" value="ACT-like_dom_sf"/>
</dbReference>
<dbReference type="InterPro" id="IPR002912">
    <property type="entry name" value="ACT_dom"/>
</dbReference>
<dbReference type="InterPro" id="IPR008310">
    <property type="entry name" value="UPF0735_ACT_dom-cont"/>
</dbReference>
<dbReference type="NCBIfam" id="NF003361">
    <property type="entry name" value="PRK04435.1"/>
    <property type="match status" value="1"/>
</dbReference>
<dbReference type="Pfam" id="PF13291">
    <property type="entry name" value="ACT_4"/>
    <property type="match status" value="1"/>
</dbReference>
<dbReference type="PIRSF" id="PIRSF025624">
    <property type="entry name" value="ACT_PheB"/>
    <property type="match status" value="1"/>
</dbReference>
<dbReference type="SUPFAM" id="SSF55021">
    <property type="entry name" value="ACT-like"/>
    <property type="match status" value="1"/>
</dbReference>
<dbReference type="PROSITE" id="PS51671">
    <property type="entry name" value="ACT"/>
    <property type="match status" value="1"/>
</dbReference>
<comment type="similarity">
    <text evidence="1">Belongs to the UPF0735 family.</text>
</comment>
<reference key="1">
    <citation type="journal article" date="2007" name="Genome Res.">
        <title>Genome sequence of a proteolytic (Group I) Clostridium botulinum strain Hall A and comparative analysis of the clostridial genomes.</title>
        <authorList>
            <person name="Sebaihia M."/>
            <person name="Peck M.W."/>
            <person name="Minton N.P."/>
            <person name="Thomson N.R."/>
            <person name="Holden M.T.G."/>
            <person name="Mitchell W.J."/>
            <person name="Carter A.T."/>
            <person name="Bentley S.D."/>
            <person name="Mason D.R."/>
            <person name="Crossman L."/>
            <person name="Paul C.J."/>
            <person name="Ivens A."/>
            <person name="Wells-Bennik M.H.J."/>
            <person name="Davis I.J."/>
            <person name="Cerdeno-Tarraga A.M."/>
            <person name="Churcher C."/>
            <person name="Quail M.A."/>
            <person name="Chillingworth T."/>
            <person name="Feltwell T."/>
            <person name="Fraser A."/>
            <person name="Goodhead I."/>
            <person name="Hance Z."/>
            <person name="Jagels K."/>
            <person name="Larke N."/>
            <person name="Maddison M."/>
            <person name="Moule S."/>
            <person name="Mungall K."/>
            <person name="Norbertczak H."/>
            <person name="Rabbinowitsch E."/>
            <person name="Sanders M."/>
            <person name="Simmonds M."/>
            <person name="White B."/>
            <person name="Whithead S."/>
            <person name="Parkhill J."/>
        </authorList>
    </citation>
    <scope>NUCLEOTIDE SEQUENCE [LARGE SCALE GENOMIC DNA]</scope>
    <source>
        <strain>Hall / ATCC 3502 / NCTC 13319 / Type A</strain>
    </source>
</reference>
<reference key="2">
    <citation type="journal article" date="2007" name="PLoS ONE">
        <title>Analysis of the neurotoxin complex genes in Clostridium botulinum A1-A4 and B1 strains: BoNT/A3, /Ba4 and /B1 clusters are located within plasmids.</title>
        <authorList>
            <person name="Smith T.J."/>
            <person name="Hill K.K."/>
            <person name="Foley B.T."/>
            <person name="Detter J.C."/>
            <person name="Munk A.C."/>
            <person name="Bruce D.C."/>
            <person name="Doggett N.A."/>
            <person name="Smith L.A."/>
            <person name="Marks J.D."/>
            <person name="Xie G."/>
            <person name="Brettin T.S."/>
        </authorList>
    </citation>
    <scope>NUCLEOTIDE SEQUENCE [LARGE SCALE GENOMIC DNA]</scope>
    <source>
        <strain>Hall / ATCC 3502 / NCTC 13319 / Type A</strain>
    </source>
</reference>
<organism>
    <name type="scientific">Clostridium botulinum (strain Hall / ATCC 3502 / NCTC 13319 / Type A)</name>
    <dbReference type="NCBI Taxonomy" id="441771"/>
    <lineage>
        <taxon>Bacteria</taxon>
        <taxon>Bacillati</taxon>
        <taxon>Bacillota</taxon>
        <taxon>Clostridia</taxon>
        <taxon>Eubacteriales</taxon>
        <taxon>Clostridiaceae</taxon>
        <taxon>Clostridium</taxon>
    </lineage>
</organism>
<feature type="chain" id="PRO_0000366301" description="UPF0735 ACT domain-containing protein CBO3010/CLC_2906">
    <location>
        <begin position="1"/>
        <end position="145"/>
    </location>
</feature>
<feature type="domain" description="ACT" evidence="1">
    <location>
        <begin position="69"/>
        <end position="144"/>
    </location>
</feature>
<keyword id="KW-1185">Reference proteome</keyword>
<accession>A5I689</accession>
<accession>A7G7H2</accession>
<name>Y3010_CLOBH</name>
<gene>
    <name type="ordered locus">CBO3010</name>
    <name type="ordered locus">CLC_2906</name>
</gene>